<gene>
    <name evidence="1" type="primary">hslV</name>
    <name type="ordered locus">THEYE_A1396</name>
</gene>
<sequence length="177" mass="19327">MDFHGTTVLCVKRNDSVIIASDGQVTMGNTVLKHNAKKIRKLYNGQVLTGFAGSTADAFTLFERFEGKLETYKGNLLRAAVELAKDWRTDKILRRLEALLIVADKEHILIISGNGDVIEPEDQVAAIGSGGPFAFAAAKALYDNTELPAKEIAIKAMEIASKICIYTNNIIITEELS</sequence>
<proteinExistence type="inferred from homology"/>
<keyword id="KW-0021">Allosteric enzyme</keyword>
<keyword id="KW-0963">Cytoplasm</keyword>
<keyword id="KW-0378">Hydrolase</keyword>
<keyword id="KW-0479">Metal-binding</keyword>
<keyword id="KW-0645">Protease</keyword>
<keyword id="KW-1185">Reference proteome</keyword>
<keyword id="KW-0915">Sodium</keyword>
<keyword id="KW-0888">Threonine protease</keyword>
<name>HSLV_THEYD</name>
<dbReference type="EC" id="3.4.25.2" evidence="1"/>
<dbReference type="EMBL" id="CP001147">
    <property type="protein sequence ID" value="ACI21527.1"/>
    <property type="molecule type" value="Genomic_DNA"/>
</dbReference>
<dbReference type="RefSeq" id="WP_012546241.1">
    <property type="nucleotide sequence ID" value="NC_011296.1"/>
</dbReference>
<dbReference type="RefSeq" id="YP_002249197.1">
    <property type="nucleotide sequence ID" value="NC_011296.1"/>
</dbReference>
<dbReference type="SMR" id="B5YFZ9"/>
<dbReference type="FunCoup" id="B5YFZ9">
    <property type="interactions" value="315"/>
</dbReference>
<dbReference type="STRING" id="289376.THEYE_A1396"/>
<dbReference type="MEROPS" id="T01.006"/>
<dbReference type="EnsemblBacteria" id="ACI21527">
    <property type="protein sequence ID" value="ACI21527"/>
    <property type="gene ID" value="THEYE_A1396"/>
</dbReference>
<dbReference type="KEGG" id="tye:THEYE_A1396"/>
<dbReference type="PATRIC" id="fig|289376.4.peg.1358"/>
<dbReference type="eggNOG" id="COG5405">
    <property type="taxonomic scope" value="Bacteria"/>
</dbReference>
<dbReference type="HOGENOM" id="CLU_093872_1_0_0"/>
<dbReference type="InParanoid" id="B5YFZ9"/>
<dbReference type="OrthoDB" id="9804884at2"/>
<dbReference type="Proteomes" id="UP000000718">
    <property type="component" value="Chromosome"/>
</dbReference>
<dbReference type="GO" id="GO:0005737">
    <property type="term" value="C:cytoplasm"/>
    <property type="evidence" value="ECO:0000318"/>
    <property type="project" value="GO_Central"/>
</dbReference>
<dbReference type="GO" id="GO:0009376">
    <property type="term" value="C:HslUV protease complex"/>
    <property type="evidence" value="ECO:0007669"/>
    <property type="project" value="UniProtKB-UniRule"/>
</dbReference>
<dbReference type="GO" id="GO:0005839">
    <property type="term" value="C:proteasome core complex"/>
    <property type="evidence" value="ECO:0007669"/>
    <property type="project" value="InterPro"/>
</dbReference>
<dbReference type="GO" id="GO:0046872">
    <property type="term" value="F:metal ion binding"/>
    <property type="evidence" value="ECO:0007669"/>
    <property type="project" value="UniProtKB-KW"/>
</dbReference>
<dbReference type="GO" id="GO:0004298">
    <property type="term" value="F:threonine-type endopeptidase activity"/>
    <property type="evidence" value="ECO:0007669"/>
    <property type="project" value="UniProtKB-KW"/>
</dbReference>
<dbReference type="GO" id="GO:0051603">
    <property type="term" value="P:proteolysis involved in protein catabolic process"/>
    <property type="evidence" value="ECO:0000318"/>
    <property type="project" value="GO_Central"/>
</dbReference>
<dbReference type="CDD" id="cd01913">
    <property type="entry name" value="protease_HslV"/>
    <property type="match status" value="1"/>
</dbReference>
<dbReference type="FunFam" id="3.60.20.10:FF:000002">
    <property type="entry name" value="ATP-dependent protease subunit HslV"/>
    <property type="match status" value="1"/>
</dbReference>
<dbReference type="Gene3D" id="3.60.20.10">
    <property type="entry name" value="Glutamine Phosphoribosylpyrophosphate, subunit 1, domain 1"/>
    <property type="match status" value="1"/>
</dbReference>
<dbReference type="HAMAP" id="MF_00248">
    <property type="entry name" value="HslV"/>
    <property type="match status" value="1"/>
</dbReference>
<dbReference type="InterPro" id="IPR022281">
    <property type="entry name" value="ATP-dep_Prtase_HsIV_su"/>
</dbReference>
<dbReference type="InterPro" id="IPR029055">
    <property type="entry name" value="Ntn_hydrolases_N"/>
</dbReference>
<dbReference type="InterPro" id="IPR001353">
    <property type="entry name" value="Proteasome_sua/b"/>
</dbReference>
<dbReference type="InterPro" id="IPR023333">
    <property type="entry name" value="Proteasome_suB-type"/>
</dbReference>
<dbReference type="NCBIfam" id="TIGR03692">
    <property type="entry name" value="ATP_dep_HslV"/>
    <property type="match status" value="1"/>
</dbReference>
<dbReference type="NCBIfam" id="NF003964">
    <property type="entry name" value="PRK05456.1"/>
    <property type="match status" value="1"/>
</dbReference>
<dbReference type="PANTHER" id="PTHR32194:SF0">
    <property type="entry name" value="ATP-DEPENDENT PROTEASE SUBUNIT HSLV"/>
    <property type="match status" value="1"/>
</dbReference>
<dbReference type="PANTHER" id="PTHR32194">
    <property type="entry name" value="METALLOPROTEASE TLDD"/>
    <property type="match status" value="1"/>
</dbReference>
<dbReference type="Pfam" id="PF00227">
    <property type="entry name" value="Proteasome"/>
    <property type="match status" value="1"/>
</dbReference>
<dbReference type="PIRSF" id="PIRSF039093">
    <property type="entry name" value="HslV"/>
    <property type="match status" value="1"/>
</dbReference>
<dbReference type="SUPFAM" id="SSF56235">
    <property type="entry name" value="N-terminal nucleophile aminohydrolases (Ntn hydrolases)"/>
    <property type="match status" value="1"/>
</dbReference>
<dbReference type="PROSITE" id="PS51476">
    <property type="entry name" value="PROTEASOME_BETA_2"/>
    <property type="match status" value="1"/>
</dbReference>
<organism>
    <name type="scientific">Thermodesulfovibrio yellowstonii (strain ATCC 51303 / DSM 11347 / YP87)</name>
    <dbReference type="NCBI Taxonomy" id="289376"/>
    <lineage>
        <taxon>Bacteria</taxon>
        <taxon>Pseudomonadati</taxon>
        <taxon>Nitrospirota</taxon>
        <taxon>Thermodesulfovibrionia</taxon>
        <taxon>Thermodesulfovibrionales</taxon>
        <taxon>Thermodesulfovibrionaceae</taxon>
        <taxon>Thermodesulfovibrio</taxon>
    </lineage>
</organism>
<feature type="chain" id="PRO_1000100924" description="ATP-dependent protease subunit HslV">
    <location>
        <begin position="1"/>
        <end position="177"/>
    </location>
</feature>
<feature type="active site" evidence="1">
    <location>
        <position position="6"/>
    </location>
</feature>
<feature type="binding site" evidence="1">
    <location>
        <position position="161"/>
    </location>
    <ligand>
        <name>Na(+)</name>
        <dbReference type="ChEBI" id="CHEBI:29101"/>
    </ligand>
</feature>
<feature type="binding site" evidence="1">
    <location>
        <position position="164"/>
    </location>
    <ligand>
        <name>Na(+)</name>
        <dbReference type="ChEBI" id="CHEBI:29101"/>
    </ligand>
</feature>
<feature type="binding site" evidence="1">
    <location>
        <position position="167"/>
    </location>
    <ligand>
        <name>Na(+)</name>
        <dbReference type="ChEBI" id="CHEBI:29101"/>
    </ligand>
</feature>
<reference key="1">
    <citation type="submission" date="2008-08" db="EMBL/GenBank/DDBJ databases">
        <title>The complete genome sequence of Thermodesulfovibrio yellowstonii strain ATCC 51303 / DSM 11347 / YP87.</title>
        <authorList>
            <person name="Dodson R.J."/>
            <person name="Durkin A.S."/>
            <person name="Wu M."/>
            <person name="Eisen J."/>
            <person name="Sutton G."/>
        </authorList>
    </citation>
    <scope>NUCLEOTIDE SEQUENCE [LARGE SCALE GENOMIC DNA]</scope>
    <source>
        <strain>ATCC 51303 / DSM 11347 / YP87</strain>
    </source>
</reference>
<protein>
    <recommendedName>
        <fullName evidence="1">ATP-dependent protease subunit HslV</fullName>
        <ecNumber evidence="1">3.4.25.2</ecNumber>
    </recommendedName>
</protein>
<evidence type="ECO:0000255" key="1">
    <source>
        <dbReference type="HAMAP-Rule" id="MF_00248"/>
    </source>
</evidence>
<comment type="function">
    <text evidence="1">Protease subunit of a proteasome-like degradation complex believed to be a general protein degrading machinery.</text>
</comment>
<comment type="catalytic activity">
    <reaction evidence="1">
        <text>ATP-dependent cleavage of peptide bonds with broad specificity.</text>
        <dbReference type="EC" id="3.4.25.2"/>
    </reaction>
</comment>
<comment type="activity regulation">
    <text evidence="1">Allosterically activated by HslU binding.</text>
</comment>
<comment type="subunit">
    <text evidence="1">A double ring-shaped homohexamer of HslV is capped on each side by a ring-shaped HslU homohexamer. The assembly of the HslU/HslV complex is dependent on binding of ATP.</text>
</comment>
<comment type="subcellular location">
    <subcellularLocation>
        <location evidence="1">Cytoplasm</location>
    </subcellularLocation>
</comment>
<comment type="similarity">
    <text evidence="1">Belongs to the peptidase T1B family. HslV subfamily.</text>
</comment>
<accession>B5YFZ9</accession>